<comment type="function">
    <text evidence="1">DNA ligase that catalyzes the formation of phosphodiester linkages between 5'-phosphoryl and 3'-hydroxyl groups in double-stranded DNA using NAD as a coenzyme and as the energy source for the reaction. It is essential for DNA replication and repair of damaged DNA.</text>
</comment>
<comment type="catalytic activity">
    <reaction evidence="1">
        <text>NAD(+) + (deoxyribonucleotide)n-3'-hydroxyl + 5'-phospho-(deoxyribonucleotide)m = (deoxyribonucleotide)n+m + AMP + beta-nicotinamide D-nucleotide.</text>
        <dbReference type="EC" id="6.5.1.2"/>
    </reaction>
</comment>
<comment type="cofactor">
    <cofactor evidence="1">
        <name>Mg(2+)</name>
        <dbReference type="ChEBI" id="CHEBI:18420"/>
    </cofactor>
    <cofactor evidence="1">
        <name>Mn(2+)</name>
        <dbReference type="ChEBI" id="CHEBI:29035"/>
    </cofactor>
</comment>
<comment type="similarity">
    <text evidence="1">Belongs to the NAD-dependent DNA ligase family. LigA subfamily.</text>
</comment>
<organism>
    <name type="scientific">Cupriavidus pinatubonensis (strain JMP 134 / LMG 1197)</name>
    <name type="common">Cupriavidus necator (strain JMP 134)</name>
    <dbReference type="NCBI Taxonomy" id="264198"/>
    <lineage>
        <taxon>Bacteria</taxon>
        <taxon>Pseudomonadati</taxon>
        <taxon>Pseudomonadota</taxon>
        <taxon>Betaproteobacteria</taxon>
        <taxon>Burkholderiales</taxon>
        <taxon>Burkholderiaceae</taxon>
        <taxon>Cupriavidus</taxon>
    </lineage>
</organism>
<gene>
    <name evidence="1" type="primary">ligA</name>
    <name type="ordered locus">Reut_A1886</name>
</gene>
<protein>
    <recommendedName>
        <fullName evidence="1">DNA ligase</fullName>
        <ecNumber evidence="1">6.5.1.2</ecNumber>
    </recommendedName>
    <alternativeName>
        <fullName evidence="1">Polydeoxyribonucleotide synthase [NAD(+)]</fullName>
    </alternativeName>
</protein>
<proteinExistence type="inferred from homology"/>
<name>DNLJ_CUPPJ</name>
<evidence type="ECO:0000255" key="1">
    <source>
        <dbReference type="HAMAP-Rule" id="MF_01588"/>
    </source>
</evidence>
<evidence type="ECO:0000256" key="2">
    <source>
        <dbReference type="SAM" id="MobiDB-lite"/>
    </source>
</evidence>
<accession>Q470D2</accession>
<sequence>MNATHRGAQADASAPAGGLPPATAAERVQWLRDELDRHNYQYYVLDAPTIPDAEYDALFTELQALEAEHPELLTPDSPTQRVGGAPLSAFDTVRHRVPMLSLNNGFSDEDVTGFDRRCAQGLGRSAAAGGEQDLFSAAEGVEYACELKFDGLAMSLRYEDGRLVQAATRGDGETGEDVTVNVRTIKAIPLKLRGAAPAVLEVRGEVFMYRRDFDKLNARQAEAGDKTFVNPRNAAAGSLRQLDPRITAKRPLSFFAYGLGELQGIERPATHSAMLDGFATMGLPVCNERAVVKGAQGLLDFYRKVGEKRDQLPYDIDGVVYKVNALAEQEQLGFVSRAPRFALAHKFPAQEMTTIVEDIEVQVGRTGAITPVARLQPVFVGGVTVTNATLHNEDEVRRKDVHIGDTVIVRRAGDVIPEVVAVVLERRPDDARAFVMPTACPVCGSHIERLEDEAIARCTGGLICAAQRKQALLHFAQRRAMDIEGLGDKVVEQLVDQGIVRTPADLYKLGVAKLAALDRMADKSAGNLVAAIEASRSTTFNRFIFSLGIRHVGEATAKDLARHFGKLDGLMVADEAALLEVNDVGPVVAQSIVNFFGEPHNVEVIEQLRAAGVHWPESEPVARAPAPLAGKTFVLTGTLPSLSREAAKEMLEAAGAKVAGSVSKKTDYVVAGAEAGSKLDKAEALGVPVLDEAGMLALLESVGAGQPGEQS</sequence>
<keyword id="KW-0227">DNA damage</keyword>
<keyword id="KW-0234">DNA repair</keyword>
<keyword id="KW-0235">DNA replication</keyword>
<keyword id="KW-0436">Ligase</keyword>
<keyword id="KW-0460">Magnesium</keyword>
<keyword id="KW-0464">Manganese</keyword>
<keyword id="KW-0479">Metal-binding</keyword>
<keyword id="KW-0520">NAD</keyword>
<keyword id="KW-0862">Zinc</keyword>
<dbReference type="EC" id="6.5.1.2" evidence="1"/>
<dbReference type="EMBL" id="CP000090">
    <property type="protein sequence ID" value="AAZ61251.1"/>
    <property type="molecule type" value="Genomic_DNA"/>
</dbReference>
<dbReference type="SMR" id="Q470D2"/>
<dbReference type="STRING" id="264198.Reut_A1886"/>
<dbReference type="KEGG" id="reu:Reut_A1886"/>
<dbReference type="eggNOG" id="COG0272">
    <property type="taxonomic scope" value="Bacteria"/>
</dbReference>
<dbReference type="HOGENOM" id="CLU_007764_2_1_4"/>
<dbReference type="OrthoDB" id="9759736at2"/>
<dbReference type="GO" id="GO:0005829">
    <property type="term" value="C:cytosol"/>
    <property type="evidence" value="ECO:0007669"/>
    <property type="project" value="TreeGrafter"/>
</dbReference>
<dbReference type="GO" id="GO:0003677">
    <property type="term" value="F:DNA binding"/>
    <property type="evidence" value="ECO:0007669"/>
    <property type="project" value="InterPro"/>
</dbReference>
<dbReference type="GO" id="GO:0003911">
    <property type="term" value="F:DNA ligase (NAD+) activity"/>
    <property type="evidence" value="ECO:0007669"/>
    <property type="project" value="UniProtKB-UniRule"/>
</dbReference>
<dbReference type="GO" id="GO:0046872">
    <property type="term" value="F:metal ion binding"/>
    <property type="evidence" value="ECO:0007669"/>
    <property type="project" value="UniProtKB-KW"/>
</dbReference>
<dbReference type="GO" id="GO:0006281">
    <property type="term" value="P:DNA repair"/>
    <property type="evidence" value="ECO:0007669"/>
    <property type="project" value="UniProtKB-KW"/>
</dbReference>
<dbReference type="GO" id="GO:0006260">
    <property type="term" value="P:DNA replication"/>
    <property type="evidence" value="ECO:0007669"/>
    <property type="project" value="UniProtKB-KW"/>
</dbReference>
<dbReference type="CDD" id="cd17748">
    <property type="entry name" value="BRCT_DNA_ligase_like"/>
    <property type="match status" value="1"/>
</dbReference>
<dbReference type="CDD" id="cd00114">
    <property type="entry name" value="LIGANc"/>
    <property type="match status" value="1"/>
</dbReference>
<dbReference type="FunFam" id="1.10.150.20:FF:000006">
    <property type="entry name" value="DNA ligase"/>
    <property type="match status" value="1"/>
</dbReference>
<dbReference type="FunFam" id="1.10.150.20:FF:000007">
    <property type="entry name" value="DNA ligase"/>
    <property type="match status" value="1"/>
</dbReference>
<dbReference type="FunFam" id="1.10.287.610:FF:000002">
    <property type="entry name" value="DNA ligase"/>
    <property type="match status" value="1"/>
</dbReference>
<dbReference type="FunFam" id="2.40.50.140:FF:000012">
    <property type="entry name" value="DNA ligase"/>
    <property type="match status" value="1"/>
</dbReference>
<dbReference type="FunFam" id="3.30.470.30:FF:000001">
    <property type="entry name" value="DNA ligase"/>
    <property type="match status" value="1"/>
</dbReference>
<dbReference type="FunFam" id="3.40.50.10190:FF:000054">
    <property type="entry name" value="DNA ligase"/>
    <property type="match status" value="1"/>
</dbReference>
<dbReference type="Gene3D" id="6.20.10.30">
    <property type="match status" value="1"/>
</dbReference>
<dbReference type="Gene3D" id="1.10.150.20">
    <property type="entry name" value="5' to 3' exonuclease, C-terminal subdomain"/>
    <property type="match status" value="2"/>
</dbReference>
<dbReference type="Gene3D" id="3.40.50.10190">
    <property type="entry name" value="BRCT domain"/>
    <property type="match status" value="1"/>
</dbReference>
<dbReference type="Gene3D" id="3.30.470.30">
    <property type="entry name" value="DNA ligase/mRNA capping enzyme"/>
    <property type="match status" value="1"/>
</dbReference>
<dbReference type="Gene3D" id="1.10.287.610">
    <property type="entry name" value="Helix hairpin bin"/>
    <property type="match status" value="1"/>
</dbReference>
<dbReference type="Gene3D" id="2.40.50.140">
    <property type="entry name" value="Nucleic acid-binding proteins"/>
    <property type="match status" value="1"/>
</dbReference>
<dbReference type="HAMAP" id="MF_01588">
    <property type="entry name" value="DNA_ligase_A"/>
    <property type="match status" value="1"/>
</dbReference>
<dbReference type="InterPro" id="IPR001357">
    <property type="entry name" value="BRCT_dom"/>
</dbReference>
<dbReference type="InterPro" id="IPR036420">
    <property type="entry name" value="BRCT_dom_sf"/>
</dbReference>
<dbReference type="InterPro" id="IPR041663">
    <property type="entry name" value="DisA/LigA_HHH"/>
</dbReference>
<dbReference type="InterPro" id="IPR001679">
    <property type="entry name" value="DNA_ligase"/>
</dbReference>
<dbReference type="InterPro" id="IPR018239">
    <property type="entry name" value="DNA_ligase_AS"/>
</dbReference>
<dbReference type="InterPro" id="IPR033136">
    <property type="entry name" value="DNA_ligase_CS"/>
</dbReference>
<dbReference type="InterPro" id="IPR013839">
    <property type="entry name" value="DNAligase_adenylation"/>
</dbReference>
<dbReference type="InterPro" id="IPR013840">
    <property type="entry name" value="DNAligase_N"/>
</dbReference>
<dbReference type="InterPro" id="IPR003583">
    <property type="entry name" value="Hlx-hairpin-Hlx_DNA-bd_motif"/>
</dbReference>
<dbReference type="InterPro" id="IPR012340">
    <property type="entry name" value="NA-bd_OB-fold"/>
</dbReference>
<dbReference type="InterPro" id="IPR004150">
    <property type="entry name" value="NAD_DNA_ligase_OB"/>
</dbReference>
<dbReference type="InterPro" id="IPR010994">
    <property type="entry name" value="RuvA_2-like"/>
</dbReference>
<dbReference type="InterPro" id="IPR004149">
    <property type="entry name" value="Znf_DNAligase_C4"/>
</dbReference>
<dbReference type="NCBIfam" id="TIGR00575">
    <property type="entry name" value="dnlj"/>
    <property type="match status" value="1"/>
</dbReference>
<dbReference type="NCBIfam" id="NF005932">
    <property type="entry name" value="PRK07956.1"/>
    <property type="match status" value="1"/>
</dbReference>
<dbReference type="PANTHER" id="PTHR23389">
    <property type="entry name" value="CHROMOSOME TRANSMISSION FIDELITY FACTOR 18"/>
    <property type="match status" value="1"/>
</dbReference>
<dbReference type="PANTHER" id="PTHR23389:SF9">
    <property type="entry name" value="DNA LIGASE"/>
    <property type="match status" value="1"/>
</dbReference>
<dbReference type="Pfam" id="PF00533">
    <property type="entry name" value="BRCT"/>
    <property type="match status" value="1"/>
</dbReference>
<dbReference type="Pfam" id="PF01653">
    <property type="entry name" value="DNA_ligase_aden"/>
    <property type="match status" value="1"/>
</dbReference>
<dbReference type="Pfam" id="PF03120">
    <property type="entry name" value="DNA_ligase_OB"/>
    <property type="match status" value="1"/>
</dbReference>
<dbReference type="Pfam" id="PF03119">
    <property type="entry name" value="DNA_ligase_ZBD"/>
    <property type="match status" value="1"/>
</dbReference>
<dbReference type="Pfam" id="PF12826">
    <property type="entry name" value="HHH_2"/>
    <property type="match status" value="1"/>
</dbReference>
<dbReference type="Pfam" id="PF14520">
    <property type="entry name" value="HHH_5"/>
    <property type="match status" value="1"/>
</dbReference>
<dbReference type="Pfam" id="PF22745">
    <property type="entry name" value="Nlig-Ia"/>
    <property type="match status" value="1"/>
</dbReference>
<dbReference type="PIRSF" id="PIRSF001604">
    <property type="entry name" value="LigA"/>
    <property type="match status" value="1"/>
</dbReference>
<dbReference type="SMART" id="SM00292">
    <property type="entry name" value="BRCT"/>
    <property type="match status" value="1"/>
</dbReference>
<dbReference type="SMART" id="SM00278">
    <property type="entry name" value="HhH1"/>
    <property type="match status" value="4"/>
</dbReference>
<dbReference type="SMART" id="SM00532">
    <property type="entry name" value="LIGANc"/>
    <property type="match status" value="1"/>
</dbReference>
<dbReference type="SUPFAM" id="SSF52113">
    <property type="entry name" value="BRCT domain"/>
    <property type="match status" value="1"/>
</dbReference>
<dbReference type="SUPFAM" id="SSF56091">
    <property type="entry name" value="DNA ligase/mRNA capping enzyme, catalytic domain"/>
    <property type="match status" value="1"/>
</dbReference>
<dbReference type="SUPFAM" id="SSF50249">
    <property type="entry name" value="Nucleic acid-binding proteins"/>
    <property type="match status" value="1"/>
</dbReference>
<dbReference type="SUPFAM" id="SSF47781">
    <property type="entry name" value="RuvA domain 2-like"/>
    <property type="match status" value="1"/>
</dbReference>
<dbReference type="PROSITE" id="PS50172">
    <property type="entry name" value="BRCT"/>
    <property type="match status" value="1"/>
</dbReference>
<dbReference type="PROSITE" id="PS01055">
    <property type="entry name" value="DNA_LIGASE_N1"/>
    <property type="match status" value="1"/>
</dbReference>
<dbReference type="PROSITE" id="PS01056">
    <property type="entry name" value="DNA_LIGASE_N2"/>
    <property type="match status" value="1"/>
</dbReference>
<feature type="chain" id="PRO_0000313387" description="DNA ligase">
    <location>
        <begin position="1"/>
        <end position="711"/>
    </location>
</feature>
<feature type="domain" description="BRCT" evidence="1">
    <location>
        <begin position="623"/>
        <end position="711"/>
    </location>
</feature>
<feature type="region of interest" description="Disordered" evidence="2">
    <location>
        <begin position="1"/>
        <end position="21"/>
    </location>
</feature>
<feature type="compositionally biased region" description="Low complexity" evidence="2">
    <location>
        <begin position="10"/>
        <end position="21"/>
    </location>
</feature>
<feature type="active site" description="N6-AMP-lysine intermediate" evidence="1">
    <location>
        <position position="148"/>
    </location>
</feature>
<feature type="binding site" evidence="1">
    <location>
        <begin position="52"/>
        <end position="56"/>
    </location>
    <ligand>
        <name>NAD(+)</name>
        <dbReference type="ChEBI" id="CHEBI:57540"/>
    </ligand>
</feature>
<feature type="binding site" evidence="1">
    <location>
        <begin position="101"/>
        <end position="102"/>
    </location>
    <ligand>
        <name>NAD(+)</name>
        <dbReference type="ChEBI" id="CHEBI:57540"/>
    </ligand>
</feature>
<feature type="binding site" evidence="1">
    <location>
        <position position="146"/>
    </location>
    <ligand>
        <name>NAD(+)</name>
        <dbReference type="ChEBI" id="CHEBI:57540"/>
    </ligand>
</feature>
<feature type="binding site" evidence="1">
    <location>
        <position position="169"/>
    </location>
    <ligand>
        <name>NAD(+)</name>
        <dbReference type="ChEBI" id="CHEBI:57540"/>
    </ligand>
</feature>
<feature type="binding site" evidence="1">
    <location>
        <position position="205"/>
    </location>
    <ligand>
        <name>NAD(+)</name>
        <dbReference type="ChEBI" id="CHEBI:57540"/>
    </ligand>
</feature>
<feature type="binding site" evidence="1">
    <location>
        <position position="322"/>
    </location>
    <ligand>
        <name>NAD(+)</name>
        <dbReference type="ChEBI" id="CHEBI:57540"/>
    </ligand>
</feature>
<feature type="binding site" evidence="1">
    <location>
        <position position="346"/>
    </location>
    <ligand>
        <name>NAD(+)</name>
        <dbReference type="ChEBI" id="CHEBI:57540"/>
    </ligand>
</feature>
<feature type="binding site" evidence="1">
    <location>
        <position position="440"/>
    </location>
    <ligand>
        <name>Zn(2+)</name>
        <dbReference type="ChEBI" id="CHEBI:29105"/>
    </ligand>
</feature>
<feature type="binding site" evidence="1">
    <location>
        <position position="443"/>
    </location>
    <ligand>
        <name>Zn(2+)</name>
        <dbReference type="ChEBI" id="CHEBI:29105"/>
    </ligand>
</feature>
<feature type="binding site" evidence="1">
    <location>
        <position position="458"/>
    </location>
    <ligand>
        <name>Zn(2+)</name>
        <dbReference type="ChEBI" id="CHEBI:29105"/>
    </ligand>
</feature>
<feature type="binding site" evidence="1">
    <location>
        <position position="464"/>
    </location>
    <ligand>
        <name>Zn(2+)</name>
        <dbReference type="ChEBI" id="CHEBI:29105"/>
    </ligand>
</feature>
<reference key="1">
    <citation type="journal article" date="2010" name="PLoS ONE">
        <title>The complete multipartite genome sequence of Cupriavidus necator JMP134, a versatile pollutant degrader.</title>
        <authorList>
            <person name="Lykidis A."/>
            <person name="Perez-Pantoja D."/>
            <person name="Ledger T."/>
            <person name="Mavromatis K."/>
            <person name="Anderson I.J."/>
            <person name="Ivanova N.N."/>
            <person name="Hooper S.D."/>
            <person name="Lapidus A."/>
            <person name="Lucas S."/>
            <person name="Gonzalez B."/>
            <person name="Kyrpides N.C."/>
        </authorList>
    </citation>
    <scope>NUCLEOTIDE SEQUENCE [LARGE SCALE GENOMIC DNA]</scope>
    <source>
        <strain>JMP134 / LMG 1197</strain>
    </source>
</reference>